<keyword id="KW-0029">Amino-acid transport</keyword>
<keyword id="KW-1003">Cell membrane</keyword>
<keyword id="KW-0449">Lipoprotein</keyword>
<keyword id="KW-0472">Membrane</keyword>
<keyword id="KW-0564">Palmitate</keyword>
<keyword id="KW-0732">Signal</keyword>
<keyword id="KW-0346">Stress response</keyword>
<keyword id="KW-0813">Transport</keyword>
<dbReference type="EMBL" id="AF039835">
    <property type="protein sequence ID" value="AAD29106.1"/>
    <property type="molecule type" value="Genomic_DNA"/>
</dbReference>
<dbReference type="EMBL" id="CP002002">
    <property type="protein sequence ID" value="AEO06016.1"/>
    <property type="molecule type" value="Genomic_DNA"/>
</dbReference>
<dbReference type="RefSeq" id="WP_003733788.1">
    <property type="nucleotide sequence ID" value="NC_017544.1"/>
</dbReference>
<dbReference type="SMR" id="Q9RR44"/>
<dbReference type="KEGG" id="lmt:LMRG_02116"/>
<dbReference type="HOGENOM" id="CLU_082654_0_0_9"/>
<dbReference type="Proteomes" id="UP000001288">
    <property type="component" value="Chromosome"/>
</dbReference>
<dbReference type="GO" id="GO:0043190">
    <property type="term" value="C:ATP-binding cassette (ABC) transporter complex"/>
    <property type="evidence" value="ECO:0007669"/>
    <property type="project" value="InterPro"/>
</dbReference>
<dbReference type="GO" id="GO:0005275">
    <property type="term" value="F:amine transmembrane transporter activity"/>
    <property type="evidence" value="ECO:0007669"/>
    <property type="project" value="TreeGrafter"/>
</dbReference>
<dbReference type="GO" id="GO:0015226">
    <property type="term" value="F:carnitine transmembrane transporter activity"/>
    <property type="evidence" value="ECO:0000314"/>
    <property type="project" value="UniProtKB"/>
</dbReference>
<dbReference type="GO" id="GO:0006865">
    <property type="term" value="P:amino acid transport"/>
    <property type="evidence" value="ECO:0007669"/>
    <property type="project" value="UniProtKB-KW"/>
</dbReference>
<dbReference type="GO" id="GO:0015879">
    <property type="term" value="P:carnitine transport"/>
    <property type="evidence" value="ECO:0000314"/>
    <property type="project" value="UniProtKB"/>
</dbReference>
<dbReference type="GO" id="GO:0015871">
    <property type="term" value="P:choline transport"/>
    <property type="evidence" value="ECO:0007669"/>
    <property type="project" value="TreeGrafter"/>
</dbReference>
<dbReference type="GO" id="GO:0031460">
    <property type="term" value="P:glycine betaine transport"/>
    <property type="evidence" value="ECO:0000314"/>
    <property type="project" value="UniProtKB"/>
</dbReference>
<dbReference type="GO" id="GO:0009409">
    <property type="term" value="P:response to cold"/>
    <property type="evidence" value="ECO:0000314"/>
    <property type="project" value="UniProtKB"/>
</dbReference>
<dbReference type="GO" id="GO:0006970">
    <property type="term" value="P:response to osmotic stress"/>
    <property type="evidence" value="ECO:0000314"/>
    <property type="project" value="UniProtKB"/>
</dbReference>
<dbReference type="CDD" id="cd13639">
    <property type="entry name" value="PBP2_OpuAC_like"/>
    <property type="match status" value="1"/>
</dbReference>
<dbReference type="FunFam" id="3.40.190.100:FF:000003">
    <property type="entry name" value="Glycine betaine-binding protein OpuAC"/>
    <property type="match status" value="1"/>
</dbReference>
<dbReference type="Gene3D" id="3.10.105.10">
    <property type="entry name" value="Dipeptide-binding Protein, Domain 3"/>
    <property type="match status" value="1"/>
</dbReference>
<dbReference type="Gene3D" id="3.40.190.100">
    <property type="entry name" value="Glycine betaine-binding periplasmic protein, domain 2"/>
    <property type="match status" value="1"/>
</dbReference>
<dbReference type="InterPro" id="IPR007210">
    <property type="entry name" value="ABC_Gly_betaine_transp_sub-bd"/>
</dbReference>
<dbReference type="PANTHER" id="PTHR47737">
    <property type="entry name" value="GLYCINE BETAINE/PROLINE BETAINE TRANSPORT SYSTEM PERMEASE PROTEIN PROW"/>
    <property type="match status" value="1"/>
</dbReference>
<dbReference type="PANTHER" id="PTHR47737:SF1">
    <property type="entry name" value="GLYCINE BETAINE_PROLINE BETAINE TRANSPORT SYSTEM PERMEASE PROTEIN PROW"/>
    <property type="match status" value="1"/>
</dbReference>
<dbReference type="Pfam" id="PF04069">
    <property type="entry name" value="OpuAC"/>
    <property type="match status" value="2"/>
</dbReference>
<dbReference type="SUPFAM" id="SSF53850">
    <property type="entry name" value="Periplasmic binding protein-like II"/>
    <property type="match status" value="2"/>
</dbReference>
<dbReference type="PROSITE" id="PS51257">
    <property type="entry name" value="PROKAR_LIPOPROTEIN"/>
    <property type="match status" value="1"/>
</dbReference>
<comment type="function">
    <text evidence="2 3 4 5">Part of the ABC transporter complex GbuABC involved in glycine betaine uptake. Involved, with BetL and OpuC, in osmoprotection and cryoprotection of Listeria. Can also uptake carnitine when carnitine is abundant in the growth medium.</text>
</comment>
<comment type="activity regulation">
    <text evidence="3">The complex is activated by an osmotic gradient or by low temperature.</text>
</comment>
<comment type="subunit">
    <text evidence="7">The complex is composed of two ATP-binding proteins (GbuA), two transmembrane proteins (GbuB) and a solute-binding protein (GbuC).</text>
</comment>
<comment type="subcellular location">
    <subcellularLocation>
        <location evidence="1">Cell membrane</location>
        <topology evidence="1">Lipid-anchor</topology>
    </subcellularLocation>
</comment>
<feature type="signal peptide" evidence="1">
    <location>
        <begin position="1"/>
        <end position="20"/>
    </location>
</feature>
<feature type="chain" id="PRO_0000417960" description="Glycine betaine/carnitine transport binding protein GbuC">
    <location>
        <begin position="21"/>
        <end position="300"/>
    </location>
</feature>
<feature type="lipid moiety-binding region" description="N-palmitoyl cysteine" evidence="1">
    <location>
        <position position="21"/>
    </location>
</feature>
<feature type="lipid moiety-binding region" description="S-diacylglycerol cysteine" evidence="1">
    <location>
        <position position="21"/>
    </location>
</feature>
<feature type="sequence conflict" description="In Ref. 1; AAD29106." evidence="6" ref="1">
    <original>K</original>
    <variation>N</variation>
    <location>
        <position position="266"/>
    </location>
</feature>
<name>GBUC_LISM4</name>
<proteinExistence type="evidence at protein level"/>
<sequence length="300" mass="33276">MLKKLITTAVLAMLIFTLAACGTTLAPYDAKKDLGEQINYTITGIDAGAGIMLATQNAIKDYHLDDDNWQLQTSSTAAMTSTLQKAMKDKRPIVVTGWTPHWMFTKFDLKFLDDPKNVYGNAENIHTIVRKGLKEDKPSAYQVLDNFFWTAEDMSEVMLEVNDGVDPEEAAKKWIKNNPDKVAKWTDGVEKVDGDEIKLTYVAWDSEIASTNVVAEALKQVGYKPTIQAMEIQPMWASVATDAADGMVAAWLPNTSGIYYKDYKGKFEDLGPNLKGAKIGLAVPKYMTNINSIEDLKTSK</sequence>
<reference key="1">
    <citation type="journal article" date="1999" name="Appl. Environ. Microbiol.">
        <title>Identification of an ATP-driven, osmoregulated glycine betaine transport system in Listeria monocytogenes.</title>
        <authorList>
            <person name="Ko R."/>
            <person name="Smith L.T."/>
        </authorList>
    </citation>
    <scope>NUCLEOTIDE SEQUENCE [GENOMIC DNA]</scope>
    <scope>FUNCTION</scope>
    <scope>SUBUNIT</scope>
    <source>
        <strain>10403S</strain>
    </source>
</reference>
<reference key="2">
    <citation type="submission" date="2010-04" db="EMBL/GenBank/DDBJ databases">
        <title>The genome sequence of Listeria monocytogenes strain 10403S.</title>
        <authorList>
            <consortium name="The Broad Institute Genome Sequencing Platform"/>
            <consortium name="The Broad Institute Genome Sequencing Center for Infectious Disease"/>
            <person name="Borowsky M."/>
            <person name="Borodovsky M."/>
            <person name="Young S.K."/>
            <person name="Zeng Q."/>
            <person name="Koehrsen M."/>
            <person name="Fitzgerald M."/>
            <person name="Wiedmann M."/>
            <person name="Swaminathan B."/>
            <person name="Lauer P."/>
            <person name="Portnoy D."/>
            <person name="Cossart P."/>
            <person name="Buchrieser C."/>
            <person name="Higgins D."/>
            <person name="Abouelleil A."/>
            <person name="Alvarado L."/>
            <person name="Arachchi H.M."/>
            <person name="Berlin A."/>
            <person name="Borenstein D."/>
            <person name="Brown A."/>
            <person name="Chapman S.B."/>
            <person name="Chen Z."/>
            <person name="Dunbar C.D."/>
            <person name="Engels R."/>
            <person name="Freedman E."/>
            <person name="Gearin G."/>
            <person name="Gellesch M."/>
            <person name="Goldberg J."/>
            <person name="Griggs A."/>
            <person name="Gujja S."/>
            <person name="Heilman E."/>
            <person name="Heiman D."/>
            <person name="Howarth C."/>
            <person name="Jen D."/>
            <person name="Larson L."/>
            <person name="Lui A."/>
            <person name="MacDonald J."/>
            <person name="Mehta T."/>
            <person name="Montmayeur A."/>
            <person name="Neiman D."/>
            <person name="Park D."/>
            <person name="Pearson M."/>
            <person name="Priest M."/>
            <person name="Richards J."/>
            <person name="Roberts A."/>
            <person name="Saif S."/>
            <person name="Shea T."/>
            <person name="Shenoy N."/>
            <person name="Sisk P."/>
            <person name="Stolte C."/>
            <person name="Sykes S."/>
            <person name="Walk T."/>
            <person name="White J."/>
            <person name="Yandava C."/>
            <person name="Haas B."/>
            <person name="Nusbaum C."/>
            <person name="Birren B."/>
        </authorList>
    </citation>
    <scope>NUCLEOTIDE SEQUENCE [LARGE SCALE GENOMIC DNA]</scope>
    <source>
        <strain>10403S</strain>
    </source>
</reference>
<reference key="3">
    <citation type="journal article" date="2000" name="J. Bacteriol.">
        <title>Osmotic and chill activation of glycine betaine porter II in Listeria monocytogenes membrane vesicles.</title>
        <authorList>
            <person name="Gerhardt P.N."/>
            <person name="Tombras Smith L."/>
            <person name="Smith G.M."/>
        </authorList>
    </citation>
    <scope>FUNCTION</scope>
    <scope>ACTIVITY REGULATION</scope>
</reference>
<reference key="4">
    <citation type="journal article" date="2002" name="Appl. Environ. Microbiol.">
        <title>Gbu glycine betaine porter and carnitine uptake in osmotically stressed Listeria monocytogenes cells.</title>
        <authorList>
            <person name="Mendum M.L."/>
            <person name="Smith L.T."/>
        </authorList>
    </citation>
    <scope>FUNCTION IN CARNITINE UPTAKE</scope>
    <source>
        <strain>10403S</strain>
    </source>
</reference>
<reference key="5">
    <citation type="journal article" date="2003" name="Appl. Environ. Microbiol.">
        <title>Three transporters mediate uptake of glycine betaine and carnitine by Listeria monocytogenes in response to hyperosmotic stress.</title>
        <authorList>
            <person name="Angelidis A.S."/>
            <person name="Smith G.M."/>
        </authorList>
    </citation>
    <scope>FUNCTION IN GLYCINE BETAINE AND CARNITINE UPTAKE</scope>
    <source>
        <strain>10403S</strain>
    </source>
</reference>
<accession>Q9RR44</accession>
<accession>G2K538</accession>
<gene>
    <name type="primary">gbuC</name>
    <name type="ordered locus">LMRG_02116</name>
</gene>
<organism>
    <name type="scientific">Listeria monocytogenes serotype 1/2a (strain 10403S)</name>
    <dbReference type="NCBI Taxonomy" id="393133"/>
    <lineage>
        <taxon>Bacteria</taxon>
        <taxon>Bacillati</taxon>
        <taxon>Bacillota</taxon>
        <taxon>Bacilli</taxon>
        <taxon>Bacillales</taxon>
        <taxon>Listeriaceae</taxon>
        <taxon>Listeria</taxon>
    </lineage>
</organism>
<protein>
    <recommendedName>
        <fullName>Glycine betaine/carnitine transport binding protein GbuC</fullName>
    </recommendedName>
</protein>
<evidence type="ECO:0000255" key="1">
    <source>
        <dbReference type="PROSITE-ProRule" id="PRU00303"/>
    </source>
</evidence>
<evidence type="ECO:0000269" key="2">
    <source>
    </source>
</evidence>
<evidence type="ECO:0000269" key="3">
    <source>
    </source>
</evidence>
<evidence type="ECO:0000269" key="4">
    <source>
    </source>
</evidence>
<evidence type="ECO:0000269" key="5">
    <source>
    </source>
</evidence>
<evidence type="ECO:0000305" key="6"/>
<evidence type="ECO:0000305" key="7">
    <source>
    </source>
</evidence>